<evidence type="ECO:0000255" key="1"/>
<evidence type="ECO:0000305" key="2"/>
<proteinExistence type="evidence at protein level"/>
<name>YGL4_YEAST</name>
<dbReference type="EMBL" id="Z72636">
    <property type="protein sequence ID" value="CAA96822.1"/>
    <property type="molecule type" value="Genomic_DNA"/>
</dbReference>
<dbReference type="EMBL" id="BK006941">
    <property type="protein sequence ID" value="DAA07994.1"/>
    <property type="molecule type" value="Genomic_DNA"/>
</dbReference>
<dbReference type="PIR" id="S64124">
    <property type="entry name" value="S64124"/>
</dbReference>
<dbReference type="RefSeq" id="NP_011401.1">
    <property type="nucleotide sequence ID" value="NM_001180979.1"/>
</dbReference>
<dbReference type="SMR" id="P53134"/>
<dbReference type="BioGRID" id="33137">
    <property type="interactions" value="174"/>
</dbReference>
<dbReference type="DIP" id="DIP-7780N"/>
<dbReference type="FunCoup" id="P53134">
    <property type="interactions" value="49"/>
</dbReference>
<dbReference type="STRING" id="4932.YGL114W"/>
<dbReference type="TCDB" id="2.A.67.2.7">
    <property type="family name" value="the oligopeptide transporter (opt) family"/>
</dbReference>
<dbReference type="iPTMnet" id="P53134"/>
<dbReference type="PaxDb" id="4932-YGL114W"/>
<dbReference type="PeptideAtlas" id="P53134"/>
<dbReference type="EnsemblFungi" id="YGL114W_mRNA">
    <property type="protein sequence ID" value="YGL114W"/>
    <property type="gene ID" value="YGL114W"/>
</dbReference>
<dbReference type="GeneID" id="852764"/>
<dbReference type="KEGG" id="sce:YGL114W"/>
<dbReference type="AGR" id="SGD:S000003082"/>
<dbReference type="SGD" id="S000003082">
    <property type="gene designation" value="YGL114W"/>
</dbReference>
<dbReference type="VEuPathDB" id="FungiDB:YGL114W"/>
<dbReference type="eggNOG" id="ENOG502QQ2H">
    <property type="taxonomic scope" value="Eukaryota"/>
</dbReference>
<dbReference type="HOGENOM" id="CLU_010539_2_0_1"/>
<dbReference type="InParanoid" id="P53134"/>
<dbReference type="OMA" id="EDRKGHW"/>
<dbReference type="OrthoDB" id="627262at2759"/>
<dbReference type="BioCyc" id="YEAST:G3O-30612-MONOMER"/>
<dbReference type="BioGRID-ORCS" id="852764">
    <property type="hits" value="1 hit in 10 CRISPR screens"/>
</dbReference>
<dbReference type="ChiTaRS" id="YGL114W">
    <property type="organism name" value="yeast"/>
</dbReference>
<dbReference type="PRO" id="PR:P53134"/>
<dbReference type="Proteomes" id="UP000002311">
    <property type="component" value="Chromosome VII"/>
</dbReference>
<dbReference type="RNAct" id="P53134">
    <property type="molecule type" value="protein"/>
</dbReference>
<dbReference type="GO" id="GO:0000329">
    <property type="term" value="C:fungal-type vacuole membrane"/>
    <property type="evidence" value="ECO:0007005"/>
    <property type="project" value="SGD"/>
</dbReference>
<dbReference type="GO" id="GO:0016020">
    <property type="term" value="C:membrane"/>
    <property type="evidence" value="ECO:0000318"/>
    <property type="project" value="GO_Central"/>
</dbReference>
<dbReference type="GO" id="GO:0005886">
    <property type="term" value="C:plasma membrane"/>
    <property type="evidence" value="ECO:0000250"/>
    <property type="project" value="SGD"/>
</dbReference>
<dbReference type="GO" id="GO:0035673">
    <property type="term" value="F:oligopeptide transmembrane transporter activity"/>
    <property type="evidence" value="ECO:0000250"/>
    <property type="project" value="SGD"/>
</dbReference>
<dbReference type="GO" id="GO:0006857">
    <property type="term" value="P:oligopeptide transport"/>
    <property type="evidence" value="ECO:0000250"/>
    <property type="project" value="SGD"/>
</dbReference>
<dbReference type="GO" id="GO:0015031">
    <property type="term" value="P:protein transport"/>
    <property type="evidence" value="ECO:0007669"/>
    <property type="project" value="UniProtKB-KW"/>
</dbReference>
<dbReference type="InterPro" id="IPR004813">
    <property type="entry name" value="OPT"/>
</dbReference>
<dbReference type="InterPro" id="IPR045035">
    <property type="entry name" value="YSL-like"/>
</dbReference>
<dbReference type="NCBIfam" id="TIGR00728">
    <property type="entry name" value="OPT_sfam"/>
    <property type="match status" value="1"/>
</dbReference>
<dbReference type="PANTHER" id="PTHR31645">
    <property type="entry name" value="OLIGOPEPTIDE TRANSPORTER YGL114W-RELATED"/>
    <property type="match status" value="1"/>
</dbReference>
<dbReference type="PANTHER" id="PTHR31645:SF0">
    <property type="entry name" value="OLIGOPEPTIDE TRANSPORTER YGL114W-RELATED"/>
    <property type="match status" value="1"/>
</dbReference>
<dbReference type="Pfam" id="PF03169">
    <property type="entry name" value="OPT"/>
    <property type="match status" value="1"/>
</dbReference>
<protein>
    <recommendedName>
        <fullName>Putative oligopeptide transporter YGL114W</fullName>
    </recommendedName>
</protein>
<feature type="chain" id="PRO_0000213789" description="Putative oligopeptide transporter YGL114W">
    <location>
        <begin position="1"/>
        <end position="725"/>
    </location>
</feature>
<feature type="transmembrane region" description="Helical" evidence="1">
    <location>
        <begin position="28"/>
        <end position="48"/>
    </location>
</feature>
<feature type="transmembrane region" description="Helical" evidence="1">
    <location>
        <begin position="134"/>
        <end position="154"/>
    </location>
</feature>
<feature type="transmembrane region" description="Helical" evidence="1">
    <location>
        <begin position="254"/>
        <end position="274"/>
    </location>
</feature>
<feature type="transmembrane region" description="Helical" evidence="1">
    <location>
        <begin position="353"/>
        <end position="373"/>
    </location>
</feature>
<feature type="transmembrane region" description="Helical" evidence="1">
    <location>
        <begin position="449"/>
        <end position="469"/>
    </location>
</feature>
<feature type="transmembrane region" description="Helical" evidence="1">
    <location>
        <begin position="472"/>
        <end position="492"/>
    </location>
</feature>
<feature type="transmembrane region" description="Helical" evidence="1">
    <location>
        <begin position="564"/>
        <end position="584"/>
    </location>
</feature>
<feature type="transmembrane region" description="Helical" evidence="1">
    <location>
        <begin position="644"/>
        <end position="664"/>
    </location>
</feature>
<feature type="transmembrane region" description="Helical" evidence="1">
    <location>
        <begin position="697"/>
        <end position="717"/>
    </location>
</feature>
<sequence>MPQSTPSQEVQRVPWDNKPALKQITLRATIAGIAIGSLVLTSNFQFGLQTGWVSMMSLPSALLACAFFKNIWPLIFPNDRPFSDVENVYVQSMAVAVGTGPLAFGFVGVIPAIEKFLTNDESGGLREQGQSFTFRELLIWSTALAFFGIFFAVPLRKQVIVREKLPFPSGSATATLISVLNGTEILQEVSKSELLEMRQRRLNECPEVLQPNRDPEEADYLMNSSHSELGDYTATSQDGSSILSTGSENYRANIIILLKTFVVSSLYTMVSYFVPVIRSIPVFGKYLSNNYLWNFQPSPAYIGQGIIMGLPTVSYMLIGCFLGWGVLAPLARYKRWVPPDADVHDWEEGVQGWILWSSLSIMVADSVVAFIVVTVKSIVKFILIDDKAALLNNIIDDTFQSMLLEEERAINSSRRNTYVDGRQDTVRLVSRDNEIEVDSKHLVRYTTVISGCLVSSIICIVSIIYLFGIQVIPLYAIITALILALFLSILGIRALGETDLNPVSGIGKISQLIFAFIIPRDRPGSVLMNVVSGGIAEASAQQAGDLMQDLKTGHLLGASPRAQFCAQLIGACWSIILSSFMYLCYNKVYSIPSEQFRIPTAVVWIDCARLVTGKGLPDKALECSMILGVIFAVLSLIRNTYRDYGYGWILYIPSGVAVGVGIFNSPSFTIARFIGGWASHFWLKNHRGDLNAKTKMIVFSSGLVLGEGIFSVINMLFICLNVPHY</sequence>
<keyword id="KW-0472">Membrane</keyword>
<keyword id="KW-0571">Peptide transport</keyword>
<keyword id="KW-0653">Protein transport</keyword>
<keyword id="KW-1185">Reference proteome</keyword>
<keyword id="KW-0812">Transmembrane</keyword>
<keyword id="KW-1133">Transmembrane helix</keyword>
<keyword id="KW-0813">Transport</keyword>
<comment type="subcellular location">
    <subcellularLocation>
        <location evidence="2">Membrane</location>
        <topology evidence="2">Multi-pass membrane protein</topology>
    </subcellularLocation>
</comment>
<comment type="similarity">
    <text evidence="2">Belongs to the oligopeptide OPT transporter family.</text>
</comment>
<accession>P53134</accession>
<accession>D6VU33</accession>
<gene>
    <name type="ordered locus">YGL114W</name>
</gene>
<reference key="1">
    <citation type="journal article" date="1997" name="Nature">
        <title>The nucleotide sequence of Saccharomyces cerevisiae chromosome VII.</title>
        <authorList>
            <person name="Tettelin H."/>
            <person name="Agostoni-Carbone M.L."/>
            <person name="Albermann K."/>
            <person name="Albers M."/>
            <person name="Arroyo J."/>
            <person name="Backes U."/>
            <person name="Barreiros T."/>
            <person name="Bertani I."/>
            <person name="Bjourson A.J."/>
            <person name="Brueckner M."/>
            <person name="Bruschi C.V."/>
            <person name="Carignani G."/>
            <person name="Castagnoli L."/>
            <person name="Cerdan E."/>
            <person name="Clemente M.L."/>
            <person name="Coblenz A."/>
            <person name="Coglievina M."/>
            <person name="Coissac E."/>
            <person name="Defoor E."/>
            <person name="Del Bino S."/>
            <person name="Delius H."/>
            <person name="Delneri D."/>
            <person name="de Wergifosse P."/>
            <person name="Dujon B."/>
            <person name="Durand P."/>
            <person name="Entian K.-D."/>
            <person name="Eraso P."/>
            <person name="Escribano V."/>
            <person name="Fabiani L."/>
            <person name="Fartmann B."/>
            <person name="Feroli F."/>
            <person name="Feuermann M."/>
            <person name="Frontali L."/>
            <person name="Garcia-Gonzalez M."/>
            <person name="Garcia-Saez M.I."/>
            <person name="Goffeau A."/>
            <person name="Guerreiro P."/>
            <person name="Hani J."/>
            <person name="Hansen M."/>
            <person name="Hebling U."/>
            <person name="Hernandez K."/>
            <person name="Heumann K."/>
            <person name="Hilger F."/>
            <person name="Hofmann B."/>
            <person name="Indge K.J."/>
            <person name="James C.M."/>
            <person name="Klima R."/>
            <person name="Koetter P."/>
            <person name="Kramer B."/>
            <person name="Kramer W."/>
            <person name="Lauquin G."/>
            <person name="Leuther H."/>
            <person name="Louis E.J."/>
            <person name="Maillier E."/>
            <person name="Marconi A."/>
            <person name="Martegani E."/>
            <person name="Mazon M.J."/>
            <person name="Mazzoni C."/>
            <person name="McReynolds A.D.K."/>
            <person name="Melchioretto P."/>
            <person name="Mewes H.-W."/>
            <person name="Minenkova O."/>
            <person name="Mueller-Auer S."/>
            <person name="Nawrocki A."/>
            <person name="Netter P."/>
            <person name="Neu R."/>
            <person name="Nombela C."/>
            <person name="Oliver S.G."/>
            <person name="Panzeri L."/>
            <person name="Paoluzi S."/>
            <person name="Plevani P."/>
            <person name="Portetelle D."/>
            <person name="Portillo F."/>
            <person name="Potier S."/>
            <person name="Purnelle B."/>
            <person name="Rieger M."/>
            <person name="Riles L."/>
            <person name="Rinaldi T."/>
            <person name="Robben J."/>
            <person name="Rodrigues-Pousada C."/>
            <person name="Rodriguez-Belmonte E."/>
            <person name="Rodriguez-Torres A.M."/>
            <person name="Rose M."/>
            <person name="Ruzzi M."/>
            <person name="Saliola M."/>
            <person name="Sanchez-Perez M."/>
            <person name="Schaefer B."/>
            <person name="Schaefer M."/>
            <person name="Scharfe M."/>
            <person name="Schmidheini T."/>
            <person name="Schreer A."/>
            <person name="Skala J."/>
            <person name="Souciet J.-L."/>
            <person name="Steensma H.Y."/>
            <person name="Talla E."/>
            <person name="Thierry A."/>
            <person name="Vandenbol M."/>
            <person name="van der Aart Q.J.M."/>
            <person name="Van Dyck L."/>
            <person name="Vanoni M."/>
            <person name="Verhasselt P."/>
            <person name="Voet M."/>
            <person name="Volckaert G."/>
            <person name="Wambutt R."/>
            <person name="Watson M.D."/>
            <person name="Weber N."/>
            <person name="Wedler E."/>
            <person name="Wedler H."/>
            <person name="Wipfli P."/>
            <person name="Wolf K."/>
            <person name="Wright L.F."/>
            <person name="Zaccaria P."/>
            <person name="Zimmermann M."/>
            <person name="Zollner A."/>
            <person name="Kleine K."/>
        </authorList>
    </citation>
    <scope>NUCLEOTIDE SEQUENCE [LARGE SCALE GENOMIC DNA]</scope>
    <source>
        <strain>ATCC 204508 / S288c</strain>
    </source>
</reference>
<reference key="2">
    <citation type="journal article" date="2014" name="G3 (Bethesda)">
        <title>The reference genome sequence of Saccharomyces cerevisiae: Then and now.</title>
        <authorList>
            <person name="Engel S.R."/>
            <person name="Dietrich F.S."/>
            <person name="Fisk D.G."/>
            <person name="Binkley G."/>
            <person name="Balakrishnan R."/>
            <person name="Costanzo M.C."/>
            <person name="Dwight S.S."/>
            <person name="Hitz B.C."/>
            <person name="Karra K."/>
            <person name="Nash R.S."/>
            <person name="Weng S."/>
            <person name="Wong E.D."/>
            <person name="Lloyd P."/>
            <person name="Skrzypek M.S."/>
            <person name="Miyasato S.R."/>
            <person name="Simison M."/>
            <person name="Cherry J.M."/>
        </authorList>
    </citation>
    <scope>GENOME REANNOTATION</scope>
    <source>
        <strain>ATCC 204508 / S288c</strain>
    </source>
</reference>
<reference key="3">
    <citation type="journal article" date="2008" name="Mol. Cell. Proteomics">
        <title>A multidimensional chromatography technology for in-depth phosphoproteome analysis.</title>
        <authorList>
            <person name="Albuquerque C.P."/>
            <person name="Smolka M.B."/>
            <person name="Payne S.H."/>
            <person name="Bafna V."/>
            <person name="Eng J."/>
            <person name="Zhou H."/>
        </authorList>
    </citation>
    <scope>IDENTIFICATION BY MASS SPECTROMETRY [LARGE SCALE ANALYSIS]</scope>
</reference>
<reference key="4">
    <citation type="journal article" date="2012" name="Proc. Natl. Acad. Sci. U.S.A.">
        <title>N-terminal acetylome analyses and functional insights of the N-terminal acetyltransferase NatB.</title>
        <authorList>
            <person name="Van Damme P."/>
            <person name="Lasa M."/>
            <person name="Polevoda B."/>
            <person name="Gazquez C."/>
            <person name="Elosegui-Artola A."/>
            <person name="Kim D.S."/>
            <person name="De Juan-Pardo E."/>
            <person name="Demeyer K."/>
            <person name="Hole K."/>
            <person name="Larrea E."/>
            <person name="Timmerman E."/>
            <person name="Prieto J."/>
            <person name="Arnesen T."/>
            <person name="Sherman F."/>
            <person name="Gevaert K."/>
            <person name="Aldabe R."/>
        </authorList>
    </citation>
    <scope>IDENTIFICATION BY MASS SPECTROMETRY [LARGE SCALE ANALYSIS]</scope>
</reference>
<organism>
    <name type="scientific">Saccharomyces cerevisiae (strain ATCC 204508 / S288c)</name>
    <name type="common">Baker's yeast</name>
    <dbReference type="NCBI Taxonomy" id="559292"/>
    <lineage>
        <taxon>Eukaryota</taxon>
        <taxon>Fungi</taxon>
        <taxon>Dikarya</taxon>
        <taxon>Ascomycota</taxon>
        <taxon>Saccharomycotina</taxon>
        <taxon>Saccharomycetes</taxon>
        <taxon>Saccharomycetales</taxon>
        <taxon>Saccharomycetaceae</taxon>
        <taxon>Saccharomyces</taxon>
    </lineage>
</organism>